<comment type="function">
    <text evidence="1">This protein is an aporepressor. When complexed with L-tryptophan it binds the operator region of the trp operon (5'-ACTAGT-'3') and prevents the initiation of transcription. The complex also regulates trp repressor biosynthesis by binding to its regulatory region.</text>
</comment>
<comment type="subunit">
    <text evidence="1">Homodimer.</text>
</comment>
<comment type="subcellular location">
    <subcellularLocation>
        <location evidence="1">Cytoplasm</location>
    </subcellularLocation>
</comment>
<comment type="similarity">
    <text evidence="1">Belongs to the TrpR family.</text>
</comment>
<organism>
    <name type="scientific">Salmonella dublin (strain CT_02021853)</name>
    <dbReference type="NCBI Taxonomy" id="439851"/>
    <lineage>
        <taxon>Bacteria</taxon>
        <taxon>Pseudomonadati</taxon>
        <taxon>Pseudomonadota</taxon>
        <taxon>Gammaproteobacteria</taxon>
        <taxon>Enterobacterales</taxon>
        <taxon>Enterobacteriaceae</taxon>
        <taxon>Salmonella</taxon>
    </lineage>
</organism>
<sequence>MTQHSPYSSAIAEQRNQEWLRFVELLRQAYAEDLHLPLLQLMLTPDEREALGTRVRIIEELLRGEMSQRELKTELGAGIATITRGSNSLKSAPVELRHWLENVLLKNA</sequence>
<keyword id="KW-0963">Cytoplasm</keyword>
<keyword id="KW-0238">DNA-binding</keyword>
<keyword id="KW-0678">Repressor</keyword>
<keyword id="KW-0804">Transcription</keyword>
<keyword id="KW-0805">Transcription regulation</keyword>
<gene>
    <name evidence="1" type="primary">trpR</name>
    <name type="ordered locus">SeD_A4995</name>
</gene>
<protein>
    <recommendedName>
        <fullName evidence="1">Trp operon repressor</fullName>
    </recommendedName>
</protein>
<evidence type="ECO:0000255" key="1">
    <source>
        <dbReference type="HAMAP-Rule" id="MF_00475"/>
    </source>
</evidence>
<proteinExistence type="inferred from homology"/>
<accession>B5FTD7</accession>
<dbReference type="EMBL" id="CP001144">
    <property type="protein sequence ID" value="ACH73958.1"/>
    <property type="molecule type" value="Genomic_DNA"/>
</dbReference>
<dbReference type="RefSeq" id="WP_000192003.1">
    <property type="nucleotide sequence ID" value="NC_011205.1"/>
</dbReference>
<dbReference type="SMR" id="B5FTD7"/>
<dbReference type="KEGG" id="sed:SeD_A4995"/>
<dbReference type="HOGENOM" id="CLU_147939_0_0_6"/>
<dbReference type="Proteomes" id="UP000008322">
    <property type="component" value="Chromosome"/>
</dbReference>
<dbReference type="GO" id="GO:0005737">
    <property type="term" value="C:cytoplasm"/>
    <property type="evidence" value="ECO:0007669"/>
    <property type="project" value="UniProtKB-SubCell"/>
</dbReference>
<dbReference type="GO" id="GO:0003700">
    <property type="term" value="F:DNA-binding transcription factor activity"/>
    <property type="evidence" value="ECO:0007669"/>
    <property type="project" value="InterPro"/>
</dbReference>
<dbReference type="GO" id="GO:0043565">
    <property type="term" value="F:sequence-specific DNA binding"/>
    <property type="evidence" value="ECO:0007669"/>
    <property type="project" value="InterPro"/>
</dbReference>
<dbReference type="GO" id="GO:0045892">
    <property type="term" value="P:negative regulation of DNA-templated transcription"/>
    <property type="evidence" value="ECO:0007669"/>
    <property type="project" value="UniProtKB-UniRule"/>
</dbReference>
<dbReference type="FunFam" id="1.10.1270.10:FF:000001">
    <property type="entry name" value="Trp operon repressor"/>
    <property type="match status" value="1"/>
</dbReference>
<dbReference type="Gene3D" id="1.10.1270.10">
    <property type="entry name" value="TrpR-like"/>
    <property type="match status" value="1"/>
</dbReference>
<dbReference type="HAMAP" id="MF_00475">
    <property type="entry name" value="Trp_repressor"/>
    <property type="match status" value="1"/>
</dbReference>
<dbReference type="InterPro" id="IPR000831">
    <property type="entry name" value="Trp_repress"/>
</dbReference>
<dbReference type="InterPro" id="IPR013335">
    <property type="entry name" value="Trp_repress_bac"/>
</dbReference>
<dbReference type="InterPro" id="IPR010921">
    <property type="entry name" value="Trp_repressor/repl_initiator"/>
</dbReference>
<dbReference type="InterPro" id="IPR038116">
    <property type="entry name" value="TrpR-like_sf"/>
</dbReference>
<dbReference type="NCBIfam" id="TIGR01321">
    <property type="entry name" value="TrpR"/>
    <property type="match status" value="1"/>
</dbReference>
<dbReference type="PANTHER" id="PTHR38025">
    <property type="entry name" value="TRP OPERON REPRESSOR"/>
    <property type="match status" value="1"/>
</dbReference>
<dbReference type="PANTHER" id="PTHR38025:SF1">
    <property type="entry name" value="TRP OPERON REPRESSOR"/>
    <property type="match status" value="1"/>
</dbReference>
<dbReference type="Pfam" id="PF01371">
    <property type="entry name" value="Trp_repressor"/>
    <property type="match status" value="1"/>
</dbReference>
<dbReference type="PIRSF" id="PIRSF003196">
    <property type="entry name" value="Trp_repressor"/>
    <property type="match status" value="1"/>
</dbReference>
<dbReference type="SUPFAM" id="SSF48295">
    <property type="entry name" value="TrpR-like"/>
    <property type="match status" value="1"/>
</dbReference>
<feature type="chain" id="PRO_1000197152" description="Trp operon repressor">
    <location>
        <begin position="1"/>
        <end position="108"/>
    </location>
</feature>
<feature type="DNA-binding region" evidence="1">
    <location>
        <begin position="68"/>
        <end position="91"/>
    </location>
</feature>
<name>TRPR_SALDC</name>
<reference key="1">
    <citation type="journal article" date="2011" name="J. Bacteriol.">
        <title>Comparative genomics of 28 Salmonella enterica isolates: evidence for CRISPR-mediated adaptive sublineage evolution.</title>
        <authorList>
            <person name="Fricke W.F."/>
            <person name="Mammel M.K."/>
            <person name="McDermott P.F."/>
            <person name="Tartera C."/>
            <person name="White D.G."/>
            <person name="Leclerc J.E."/>
            <person name="Ravel J."/>
            <person name="Cebula T.A."/>
        </authorList>
    </citation>
    <scope>NUCLEOTIDE SEQUENCE [LARGE SCALE GENOMIC DNA]</scope>
    <source>
        <strain>CT_02021853</strain>
    </source>
</reference>